<feature type="chain" id="PRO_1000000385" description="Argininosuccinate synthase">
    <location>
        <begin position="1"/>
        <end position="405"/>
    </location>
</feature>
<feature type="binding site" evidence="1">
    <location>
        <begin position="9"/>
        <end position="17"/>
    </location>
    <ligand>
        <name>ATP</name>
        <dbReference type="ChEBI" id="CHEBI:30616"/>
    </ligand>
</feature>
<feature type="binding site" evidence="1">
    <location>
        <position position="87"/>
    </location>
    <ligand>
        <name>L-citrulline</name>
        <dbReference type="ChEBI" id="CHEBI:57743"/>
    </ligand>
</feature>
<feature type="binding site" evidence="1">
    <location>
        <position position="92"/>
    </location>
    <ligand>
        <name>L-citrulline</name>
        <dbReference type="ChEBI" id="CHEBI:57743"/>
    </ligand>
</feature>
<feature type="binding site" evidence="1">
    <location>
        <position position="117"/>
    </location>
    <ligand>
        <name>ATP</name>
        <dbReference type="ChEBI" id="CHEBI:30616"/>
    </ligand>
</feature>
<feature type="binding site" evidence="1">
    <location>
        <position position="119"/>
    </location>
    <ligand>
        <name>L-aspartate</name>
        <dbReference type="ChEBI" id="CHEBI:29991"/>
    </ligand>
</feature>
<feature type="binding site" evidence="1">
    <location>
        <position position="123"/>
    </location>
    <ligand>
        <name>L-aspartate</name>
        <dbReference type="ChEBI" id="CHEBI:29991"/>
    </ligand>
</feature>
<feature type="binding site" evidence="1">
    <location>
        <position position="123"/>
    </location>
    <ligand>
        <name>L-citrulline</name>
        <dbReference type="ChEBI" id="CHEBI:57743"/>
    </ligand>
</feature>
<feature type="binding site" evidence="1">
    <location>
        <position position="124"/>
    </location>
    <ligand>
        <name>L-aspartate</name>
        <dbReference type="ChEBI" id="CHEBI:29991"/>
    </ligand>
</feature>
<feature type="binding site" evidence="1">
    <location>
        <position position="127"/>
    </location>
    <ligand>
        <name>L-citrulline</name>
        <dbReference type="ChEBI" id="CHEBI:57743"/>
    </ligand>
</feature>
<feature type="binding site" evidence="1">
    <location>
        <position position="176"/>
    </location>
    <ligand>
        <name>L-citrulline</name>
        <dbReference type="ChEBI" id="CHEBI:57743"/>
    </ligand>
</feature>
<feature type="binding site" evidence="1">
    <location>
        <position position="185"/>
    </location>
    <ligand>
        <name>L-citrulline</name>
        <dbReference type="ChEBI" id="CHEBI:57743"/>
    </ligand>
</feature>
<feature type="binding site" evidence="1">
    <location>
        <position position="262"/>
    </location>
    <ligand>
        <name>L-citrulline</name>
        <dbReference type="ChEBI" id="CHEBI:57743"/>
    </ligand>
</feature>
<feature type="binding site" evidence="1">
    <location>
        <position position="274"/>
    </location>
    <ligand>
        <name>L-citrulline</name>
        <dbReference type="ChEBI" id="CHEBI:57743"/>
    </ligand>
</feature>
<gene>
    <name evidence="1" type="primary">argG</name>
    <name type="ordered locus">Csac_1814</name>
</gene>
<reference key="1">
    <citation type="submission" date="2007-04" db="EMBL/GenBank/DDBJ databases">
        <title>Genome sequence of the thermophilic hydrogen-producing bacterium Caldicellulosiruptor saccharolyticus DSM 8903.</title>
        <authorList>
            <person name="Copeland A."/>
            <person name="Lucas S."/>
            <person name="Lapidus A."/>
            <person name="Barry K."/>
            <person name="Detter J.C."/>
            <person name="Glavina del Rio T."/>
            <person name="Hammon N."/>
            <person name="Israni S."/>
            <person name="Dalin E."/>
            <person name="Tice H."/>
            <person name="Pitluck S."/>
            <person name="Kiss H."/>
            <person name="Brettin T."/>
            <person name="Bruce D."/>
            <person name="Han C."/>
            <person name="Schmutz J."/>
            <person name="Larimer F."/>
            <person name="Land M."/>
            <person name="Hauser L."/>
            <person name="Kyrpides N."/>
            <person name="Lykidis A."/>
            <person name="van de Werken H.J.G."/>
            <person name="Verhaart M.R.A."/>
            <person name="VanFossen A.L."/>
            <person name="Lewis D.L."/>
            <person name="Nichols J.D."/>
            <person name="Goorissen H.P."/>
            <person name="van Niel E.W.J."/>
            <person name="Stams F.J.M."/>
            <person name="Willquist K.U."/>
            <person name="Ward D.E."/>
            <person name="van der Oost J."/>
            <person name="Kelly R.M."/>
            <person name="Kengen S.M.W."/>
            <person name="Richardson P."/>
        </authorList>
    </citation>
    <scope>NUCLEOTIDE SEQUENCE [LARGE SCALE GENOMIC DNA]</scope>
    <source>
        <strain>ATCC 43494 / DSM 8903 / Tp8T 6331</strain>
    </source>
</reference>
<name>ASSY_CALS8</name>
<dbReference type="EC" id="6.3.4.5" evidence="1"/>
<dbReference type="EMBL" id="CP000679">
    <property type="protein sequence ID" value="ABP67399.1"/>
    <property type="molecule type" value="Genomic_DNA"/>
</dbReference>
<dbReference type="RefSeq" id="WP_011917333.1">
    <property type="nucleotide sequence ID" value="NC_009437.1"/>
</dbReference>
<dbReference type="SMR" id="A4XKG4"/>
<dbReference type="STRING" id="351627.Csac_1814"/>
<dbReference type="KEGG" id="csc:Csac_1814"/>
<dbReference type="eggNOG" id="COG0137">
    <property type="taxonomic scope" value="Bacteria"/>
</dbReference>
<dbReference type="HOGENOM" id="CLU_032784_4_2_9"/>
<dbReference type="OrthoDB" id="9801641at2"/>
<dbReference type="UniPathway" id="UPA00068">
    <property type="reaction ID" value="UER00113"/>
</dbReference>
<dbReference type="Proteomes" id="UP000000256">
    <property type="component" value="Chromosome"/>
</dbReference>
<dbReference type="GO" id="GO:0005737">
    <property type="term" value="C:cytoplasm"/>
    <property type="evidence" value="ECO:0007669"/>
    <property type="project" value="UniProtKB-SubCell"/>
</dbReference>
<dbReference type="GO" id="GO:0004055">
    <property type="term" value="F:argininosuccinate synthase activity"/>
    <property type="evidence" value="ECO:0007669"/>
    <property type="project" value="UniProtKB-UniRule"/>
</dbReference>
<dbReference type="GO" id="GO:0005524">
    <property type="term" value="F:ATP binding"/>
    <property type="evidence" value="ECO:0007669"/>
    <property type="project" value="UniProtKB-UniRule"/>
</dbReference>
<dbReference type="GO" id="GO:0000053">
    <property type="term" value="P:argininosuccinate metabolic process"/>
    <property type="evidence" value="ECO:0007669"/>
    <property type="project" value="TreeGrafter"/>
</dbReference>
<dbReference type="GO" id="GO:0006526">
    <property type="term" value="P:L-arginine biosynthetic process"/>
    <property type="evidence" value="ECO:0007669"/>
    <property type="project" value="UniProtKB-UniRule"/>
</dbReference>
<dbReference type="GO" id="GO:0000050">
    <property type="term" value="P:urea cycle"/>
    <property type="evidence" value="ECO:0007669"/>
    <property type="project" value="TreeGrafter"/>
</dbReference>
<dbReference type="CDD" id="cd01999">
    <property type="entry name" value="ASS"/>
    <property type="match status" value="1"/>
</dbReference>
<dbReference type="FunFam" id="3.40.50.620:FF:000019">
    <property type="entry name" value="Argininosuccinate synthase"/>
    <property type="match status" value="1"/>
</dbReference>
<dbReference type="FunFam" id="3.90.1260.10:FF:000007">
    <property type="entry name" value="Argininosuccinate synthase"/>
    <property type="match status" value="1"/>
</dbReference>
<dbReference type="Gene3D" id="3.90.1260.10">
    <property type="entry name" value="Argininosuccinate synthetase, chain A, domain 2"/>
    <property type="match status" value="1"/>
</dbReference>
<dbReference type="Gene3D" id="3.40.50.620">
    <property type="entry name" value="HUPs"/>
    <property type="match status" value="1"/>
</dbReference>
<dbReference type="Gene3D" id="1.20.5.470">
    <property type="entry name" value="Single helix bin"/>
    <property type="match status" value="1"/>
</dbReference>
<dbReference type="HAMAP" id="MF_00005">
    <property type="entry name" value="Arg_succ_synth_type1"/>
    <property type="match status" value="1"/>
</dbReference>
<dbReference type="InterPro" id="IPR048268">
    <property type="entry name" value="Arginosuc_syn_C"/>
</dbReference>
<dbReference type="InterPro" id="IPR048267">
    <property type="entry name" value="Arginosuc_syn_N"/>
</dbReference>
<dbReference type="InterPro" id="IPR001518">
    <property type="entry name" value="Arginosuc_synth"/>
</dbReference>
<dbReference type="InterPro" id="IPR018223">
    <property type="entry name" value="Arginosuc_synth_CS"/>
</dbReference>
<dbReference type="InterPro" id="IPR023434">
    <property type="entry name" value="Arginosuc_synth_type_1_subfam"/>
</dbReference>
<dbReference type="InterPro" id="IPR024074">
    <property type="entry name" value="AS_cat/multimer_dom_body"/>
</dbReference>
<dbReference type="InterPro" id="IPR014729">
    <property type="entry name" value="Rossmann-like_a/b/a_fold"/>
</dbReference>
<dbReference type="NCBIfam" id="TIGR00032">
    <property type="entry name" value="argG"/>
    <property type="match status" value="1"/>
</dbReference>
<dbReference type="NCBIfam" id="NF001770">
    <property type="entry name" value="PRK00509.1"/>
    <property type="match status" value="1"/>
</dbReference>
<dbReference type="PANTHER" id="PTHR11587">
    <property type="entry name" value="ARGININOSUCCINATE SYNTHASE"/>
    <property type="match status" value="1"/>
</dbReference>
<dbReference type="PANTHER" id="PTHR11587:SF2">
    <property type="entry name" value="ARGININOSUCCINATE SYNTHASE"/>
    <property type="match status" value="1"/>
</dbReference>
<dbReference type="Pfam" id="PF20979">
    <property type="entry name" value="Arginosuc_syn_C"/>
    <property type="match status" value="1"/>
</dbReference>
<dbReference type="Pfam" id="PF00764">
    <property type="entry name" value="Arginosuc_synth"/>
    <property type="match status" value="1"/>
</dbReference>
<dbReference type="SUPFAM" id="SSF52402">
    <property type="entry name" value="Adenine nucleotide alpha hydrolases-like"/>
    <property type="match status" value="1"/>
</dbReference>
<dbReference type="SUPFAM" id="SSF69864">
    <property type="entry name" value="Argininosuccinate synthetase, C-terminal domain"/>
    <property type="match status" value="1"/>
</dbReference>
<dbReference type="PROSITE" id="PS00564">
    <property type="entry name" value="ARGININOSUCCIN_SYN_1"/>
    <property type="match status" value="1"/>
</dbReference>
<dbReference type="PROSITE" id="PS00565">
    <property type="entry name" value="ARGININOSUCCIN_SYN_2"/>
    <property type="match status" value="1"/>
</dbReference>
<organism>
    <name type="scientific">Caldicellulosiruptor saccharolyticus (strain ATCC 43494 / DSM 8903 / Tp8T 6331)</name>
    <dbReference type="NCBI Taxonomy" id="351627"/>
    <lineage>
        <taxon>Bacteria</taxon>
        <taxon>Bacillati</taxon>
        <taxon>Bacillota</taxon>
        <taxon>Bacillota incertae sedis</taxon>
        <taxon>Caldicellulosiruptorales</taxon>
        <taxon>Caldicellulosiruptoraceae</taxon>
        <taxon>Caldicellulosiruptor</taxon>
    </lineage>
</organism>
<proteinExistence type="inferred from homology"/>
<keyword id="KW-0028">Amino-acid biosynthesis</keyword>
<keyword id="KW-0055">Arginine biosynthesis</keyword>
<keyword id="KW-0067">ATP-binding</keyword>
<keyword id="KW-0963">Cytoplasm</keyword>
<keyword id="KW-0436">Ligase</keyword>
<keyword id="KW-0547">Nucleotide-binding</keyword>
<protein>
    <recommendedName>
        <fullName evidence="1">Argininosuccinate synthase</fullName>
        <ecNumber evidence="1">6.3.4.5</ecNumber>
    </recommendedName>
    <alternativeName>
        <fullName evidence="1">Citrulline--aspartate ligase</fullName>
    </alternativeName>
</protein>
<comment type="catalytic activity">
    <reaction evidence="1">
        <text>L-citrulline + L-aspartate + ATP = 2-(N(omega)-L-arginino)succinate + AMP + diphosphate + H(+)</text>
        <dbReference type="Rhea" id="RHEA:10932"/>
        <dbReference type="ChEBI" id="CHEBI:15378"/>
        <dbReference type="ChEBI" id="CHEBI:29991"/>
        <dbReference type="ChEBI" id="CHEBI:30616"/>
        <dbReference type="ChEBI" id="CHEBI:33019"/>
        <dbReference type="ChEBI" id="CHEBI:57472"/>
        <dbReference type="ChEBI" id="CHEBI:57743"/>
        <dbReference type="ChEBI" id="CHEBI:456215"/>
        <dbReference type="EC" id="6.3.4.5"/>
    </reaction>
</comment>
<comment type="pathway">
    <text evidence="1">Amino-acid biosynthesis; L-arginine biosynthesis; L-arginine from L-ornithine and carbamoyl phosphate: step 2/3.</text>
</comment>
<comment type="subunit">
    <text evidence="1">Homotetramer.</text>
</comment>
<comment type="subcellular location">
    <subcellularLocation>
        <location evidence="1">Cytoplasm</location>
    </subcellularLocation>
</comment>
<comment type="similarity">
    <text evidence="1">Belongs to the argininosuccinate synthase family. Type 1 subfamily.</text>
</comment>
<accession>A4XKG4</accession>
<sequence>MQLNKVVLAYSGGLDTSVIIPWLKENFSCEVIAVVVDVGQEDDFETIKERAYKTGASKVYIEDAKAEFVKEYIFPTLKAGAVYEGKYLLGTSMARPLIAKRLVEIAKKENADAIAHGATGKGNDQVRFEVTIKALMPNIKIIAPWRMWNLKSREDELNYLAQKGIDIPFKKEESYSTDWNIWHLSHEGLELEDPWNMPNFEKVLMIIKNPFSLNDEPETIEIEFEKGVPIKINGKEMNCVELLKYLNKKGAEHGIGIVDIVENRLVGMKSRGVYETPGGTILHYAHRELEYLCLDRATLHFKEMVAIRFAELVYDGLWFSPLREALSAFVDKTQEVVNGTVKLVLYRGNIYSAGSKSPNSLYIKDLATFEEDQMYNQKDAEGFINLFGLPLKVFGMVNKKAGDSD</sequence>
<evidence type="ECO:0000255" key="1">
    <source>
        <dbReference type="HAMAP-Rule" id="MF_00005"/>
    </source>
</evidence>